<proteinExistence type="evidence at protein level"/>
<reference key="1">
    <citation type="journal article" date="2012" name="Plant J.">
        <title>Dynamic evolution of herbivore-induced sesquiterpene biosynthesis in sorghum and related grass crops.</title>
        <authorList>
            <person name="Zhuang X."/>
            <person name="Koellner T.G."/>
            <person name="Zhao N."/>
            <person name="Li G."/>
            <person name="Jiang Y."/>
            <person name="Zhu L."/>
            <person name="Ma J."/>
            <person name="Degenhardt J."/>
            <person name="Chen F."/>
        </authorList>
    </citation>
    <scope>NUCLEOTIDE SEQUENCE [MRNA]</scope>
    <scope>MUTAGENESIS OF TYR-369; LEU-401 AND VAL-435</scope>
    <scope>FUNCTION</scope>
    <scope>CATALYTIC ACTIVITY</scope>
    <scope>INDUCTION BY HERBIVORY</scope>
    <scope>3D-STRUCTURE MODELING</scope>
</reference>
<reference key="2">
    <citation type="journal article" date="2009" name="Nature">
        <title>The Sorghum bicolor genome and the diversification of grasses.</title>
        <authorList>
            <person name="Paterson A.H."/>
            <person name="Bowers J.E."/>
            <person name="Bruggmann R."/>
            <person name="Dubchak I."/>
            <person name="Grimwood J."/>
            <person name="Gundlach H."/>
            <person name="Haberer G."/>
            <person name="Hellsten U."/>
            <person name="Mitros T."/>
            <person name="Poliakov A."/>
            <person name="Schmutz J."/>
            <person name="Spannagl M."/>
            <person name="Tang H."/>
            <person name="Wang X."/>
            <person name="Wicker T."/>
            <person name="Bharti A.K."/>
            <person name="Chapman J."/>
            <person name="Feltus F.A."/>
            <person name="Gowik U."/>
            <person name="Grigoriev I.V."/>
            <person name="Lyons E."/>
            <person name="Maher C.A."/>
            <person name="Martis M."/>
            <person name="Narechania A."/>
            <person name="Otillar R.P."/>
            <person name="Penning B.W."/>
            <person name="Salamov A.A."/>
            <person name="Wang Y."/>
            <person name="Zhang L."/>
            <person name="Carpita N.C."/>
            <person name="Freeling M."/>
            <person name="Gingle A.R."/>
            <person name="Hash C.T."/>
            <person name="Keller B."/>
            <person name="Klein P."/>
            <person name="Kresovich S."/>
            <person name="McCann M.C."/>
            <person name="Ming R."/>
            <person name="Peterson D.G."/>
            <person name="Mehboob-ur-Rahman M."/>
            <person name="Ware D."/>
            <person name="Westhoff P."/>
            <person name="Mayer K.F.X."/>
            <person name="Messing J."/>
            <person name="Rokhsar D.S."/>
        </authorList>
    </citation>
    <scope>NUCLEOTIDE SEQUENCE [LARGE SCALE GENOMIC DNA]</scope>
    <source>
        <strain>cv. BTx623</strain>
    </source>
</reference>
<reference key="3">
    <citation type="journal article" date="2018" name="Plant J.">
        <title>The Sorghum bicolor reference genome: improved assembly, gene annotations, a transcriptome atlas, and signatures of genome organization.</title>
        <authorList>
            <person name="McCormick R.F."/>
            <person name="Truong S.K."/>
            <person name="Sreedasyam A."/>
            <person name="Jenkins J."/>
            <person name="Shu S."/>
            <person name="Sims D."/>
            <person name="Kennedy M."/>
            <person name="Amirebrahimi M."/>
            <person name="Weers B.D."/>
            <person name="McKinley B."/>
            <person name="Mattison A."/>
            <person name="Morishige D.T."/>
            <person name="Grimwood J."/>
            <person name="Schmutz J."/>
            <person name="Mullet J.E."/>
        </authorList>
    </citation>
    <scope>GENOME REANNOTATION</scope>
    <source>
        <strain>cv. BTx623</strain>
    </source>
</reference>
<gene>
    <name type="primary">TPS1</name>
    <name type="ordered locus">Sb07g004470</name>
</gene>
<accession>C5YHH7</accession>
<sequence>MAALQYNCDAGLAKAPTFHPSLWGDFFLTYQPPTAPQHVYMKERAELLKEEVREIVKGTNELPKLLDLIITLQRLGLDNHYEIEIDEHLHFIYNSSCDVKDLNLVSLRFYLLRKNGYDVSSDVFLNFKDKDGNFASDDIRSLLSLYNAAYLRTHGEEVLDEAIIFTRRHLEAALTSLESKLADEVSLSLQTPLFRRVRILETRNYIPIYEMEPSRNEAMLEFAKLNFNLLQILYCEELKTVTAWWKQLNIETDLSFIRDRIVEMHFWMAGACSEPKYSLSRVILTKMTAFITILDDIIDTHSTTEEGKLLAKAIDRCSQDANEVLPDYMKHFYMFLLKTFDSCEDELGPNKRYRVFYLKELLKILVRGYSQEIEWRDEHYVPETIDKHLEISRVTVGAFQLACSSFVGMGDIITKEVLDWLLTYPELLKCFTTFVRLSNDITSTKREQTGGHHASTVQCYMMEHSTTMHDACEKIKGLIEDSWKDMMQLYLTPTEQSKVVAQTVVDFARTGDYMYKKTDAFTFSHTIKDMIALLYVEPILF</sequence>
<name>TPS1_SORBI</name>
<dbReference type="EC" id="4.2.3.65"/>
<dbReference type="EMBL" id="CM000766">
    <property type="protein sequence ID" value="EES13421.1"/>
    <property type="status" value="ALT_SEQ"/>
    <property type="molecule type" value="Genomic_DNA"/>
</dbReference>
<dbReference type="SMR" id="C5YHH7"/>
<dbReference type="FunCoup" id="C5YHH7">
    <property type="interactions" value="505"/>
</dbReference>
<dbReference type="STRING" id="4558.C5YHH7"/>
<dbReference type="eggNOG" id="ENOG502QUCN">
    <property type="taxonomic scope" value="Eukaryota"/>
</dbReference>
<dbReference type="HOGENOM" id="CLU_003125_7_2_1"/>
<dbReference type="InParanoid" id="C5YHH7"/>
<dbReference type="UniPathway" id="UPA00213"/>
<dbReference type="Proteomes" id="UP000000768">
    <property type="component" value="Chromosome 7"/>
</dbReference>
<dbReference type="ExpressionAtlas" id="C5YHH7">
    <property type="expression patterns" value="baseline and differential"/>
</dbReference>
<dbReference type="GO" id="GO:0005737">
    <property type="term" value="C:cytoplasm"/>
    <property type="evidence" value="ECO:0007669"/>
    <property type="project" value="UniProtKB-SubCell"/>
</dbReference>
<dbReference type="GO" id="GO:0102884">
    <property type="term" value="F:alpha-zingiberene synthase activity"/>
    <property type="evidence" value="ECO:0007669"/>
    <property type="project" value="UniProtKB-EC"/>
</dbReference>
<dbReference type="GO" id="GO:0000287">
    <property type="term" value="F:magnesium ion binding"/>
    <property type="evidence" value="ECO:0007669"/>
    <property type="project" value="InterPro"/>
</dbReference>
<dbReference type="GO" id="GO:0010333">
    <property type="term" value="F:terpene synthase activity"/>
    <property type="evidence" value="ECO:0007669"/>
    <property type="project" value="InterPro"/>
</dbReference>
<dbReference type="GO" id="GO:0006952">
    <property type="term" value="P:defense response"/>
    <property type="evidence" value="ECO:0007669"/>
    <property type="project" value="UniProtKB-KW"/>
</dbReference>
<dbReference type="GO" id="GO:0016102">
    <property type="term" value="P:diterpenoid biosynthetic process"/>
    <property type="evidence" value="ECO:0007669"/>
    <property type="project" value="InterPro"/>
</dbReference>
<dbReference type="CDD" id="cd00684">
    <property type="entry name" value="Terpene_cyclase_plant_C1"/>
    <property type="match status" value="1"/>
</dbReference>
<dbReference type="FunFam" id="1.10.600.10:FF:000007">
    <property type="entry name" value="Isoprene synthase, chloroplastic"/>
    <property type="match status" value="1"/>
</dbReference>
<dbReference type="Gene3D" id="1.10.600.10">
    <property type="entry name" value="Farnesyl Diphosphate Synthase"/>
    <property type="match status" value="1"/>
</dbReference>
<dbReference type="Gene3D" id="1.50.10.130">
    <property type="entry name" value="Terpene synthase, N-terminal domain"/>
    <property type="match status" value="1"/>
</dbReference>
<dbReference type="InterPro" id="IPR008949">
    <property type="entry name" value="Isoprenoid_synthase_dom_sf"/>
</dbReference>
<dbReference type="InterPro" id="IPR034741">
    <property type="entry name" value="Terpene_cyclase-like_1_C"/>
</dbReference>
<dbReference type="InterPro" id="IPR044814">
    <property type="entry name" value="Terpene_cyclase_plant_C1"/>
</dbReference>
<dbReference type="InterPro" id="IPR001906">
    <property type="entry name" value="Terpene_synth_N"/>
</dbReference>
<dbReference type="InterPro" id="IPR036965">
    <property type="entry name" value="Terpene_synth_N_sf"/>
</dbReference>
<dbReference type="InterPro" id="IPR050148">
    <property type="entry name" value="Terpene_synthase-like"/>
</dbReference>
<dbReference type="InterPro" id="IPR005630">
    <property type="entry name" value="Terpene_synthase_metal-bd"/>
</dbReference>
<dbReference type="InterPro" id="IPR008930">
    <property type="entry name" value="Terpenoid_cyclase/PrenylTrfase"/>
</dbReference>
<dbReference type="PANTHER" id="PTHR31225:SF118">
    <property type="entry name" value="(E)-BETA-FARNESENE SYNTHASE"/>
    <property type="match status" value="1"/>
</dbReference>
<dbReference type="PANTHER" id="PTHR31225">
    <property type="entry name" value="OS04G0344100 PROTEIN-RELATED"/>
    <property type="match status" value="1"/>
</dbReference>
<dbReference type="Pfam" id="PF01397">
    <property type="entry name" value="Terpene_synth"/>
    <property type="match status" value="1"/>
</dbReference>
<dbReference type="Pfam" id="PF03936">
    <property type="entry name" value="Terpene_synth_C"/>
    <property type="match status" value="1"/>
</dbReference>
<dbReference type="SFLD" id="SFLDS00005">
    <property type="entry name" value="Isoprenoid_Synthase_Type_I"/>
    <property type="match status" value="1"/>
</dbReference>
<dbReference type="SFLD" id="SFLDG01019">
    <property type="entry name" value="Terpene_Cyclase_Like_1_C_Termi"/>
    <property type="match status" value="1"/>
</dbReference>
<dbReference type="SUPFAM" id="SSF48239">
    <property type="entry name" value="Terpenoid cyclases/Protein prenyltransferases"/>
    <property type="match status" value="1"/>
</dbReference>
<dbReference type="SUPFAM" id="SSF48576">
    <property type="entry name" value="Terpenoid synthases"/>
    <property type="match status" value="1"/>
</dbReference>
<evidence type="ECO:0000250" key="1"/>
<evidence type="ECO:0000269" key="2">
    <source>
    </source>
</evidence>
<evidence type="ECO:0000305" key="3"/>
<comment type="function">
    <text evidence="2">Sesquiterpene synthase converting farnesyl diphosphate into two major products, zingiberene &gt; beta-sesquiphellandrene, and five minor products, 7-epi-sesquithujene, sesquisabinene A, (E)-alpha-bergamotene, (E)-beta-farnesene and beta-bisabolene. Can also accept geranyl diphosphate as substrate, producing nine monoterpenes, with myrcene, limonene and alpha-terpinolene as the major products.</text>
</comment>
<comment type="catalytic activity">
    <reaction evidence="2">
        <text>(2E,6E)-farnesyl diphosphate = alpha-zingiberene + diphosphate</text>
        <dbReference type="Rhea" id="RHEA:28643"/>
        <dbReference type="ChEBI" id="CHEBI:10115"/>
        <dbReference type="ChEBI" id="CHEBI:33019"/>
        <dbReference type="ChEBI" id="CHEBI:175763"/>
        <dbReference type="EC" id="4.2.3.65"/>
    </reaction>
</comment>
<comment type="cofactor">
    <cofactor evidence="1">
        <name>Mg(2+)</name>
        <dbReference type="ChEBI" id="CHEBI:18420"/>
    </cofactor>
    <cofactor evidence="1">
        <name>Mn(2+)</name>
        <dbReference type="ChEBI" id="CHEBI:29035"/>
    </cofactor>
    <text evidence="1">Binds 3 Mg(2+) or Mn(2+) ions per subunit.</text>
</comment>
<comment type="pathway">
    <text>Secondary metabolite biosynthesis; terpenoid biosynthesis.</text>
</comment>
<comment type="subcellular location">
    <subcellularLocation>
        <location evidence="3">Cytoplasm</location>
    </subcellularLocation>
</comment>
<comment type="induction">
    <text evidence="2">Up-regulated by herbivory.</text>
</comment>
<comment type="domain">
    <text evidence="1">The Asp-Asp-Xaa-Xaa-Asp/Glu (DDXXD/E) motif is important for the catalytic activity, presumably through binding to Mg(2+).</text>
</comment>
<comment type="similarity">
    <text evidence="3">Belongs to the terpene synthase family.</text>
</comment>
<comment type="sequence caution" evidence="3">
    <conflict type="erroneous gene model prediction">
        <sequence resource="EMBL-CDS" id="EES13421"/>
    </conflict>
</comment>
<protein>
    <recommendedName>
        <fullName>Zingiberene synthase</fullName>
        <shortName>SbTPS1</shortName>
        <ecNumber>4.2.3.65</ecNumber>
    </recommendedName>
</protein>
<feature type="chain" id="PRO_0000418831" description="Zingiberene synthase">
    <location>
        <begin position="1"/>
        <end position="541"/>
    </location>
</feature>
<feature type="short sequence motif" description="DDXXD motif">
    <location>
        <begin position="295"/>
        <end position="299"/>
    </location>
</feature>
<feature type="binding site" evidence="1">
    <location>
        <position position="295"/>
    </location>
    <ligand>
        <name>Mg(2+)</name>
        <dbReference type="ChEBI" id="CHEBI:18420"/>
        <label>1</label>
    </ligand>
</feature>
<feature type="binding site" evidence="1">
    <location>
        <position position="295"/>
    </location>
    <ligand>
        <name>Mg(2+)</name>
        <dbReference type="ChEBI" id="CHEBI:18420"/>
        <label>2</label>
    </ligand>
</feature>
<feature type="binding site" evidence="1">
    <location>
        <position position="299"/>
    </location>
    <ligand>
        <name>Mg(2+)</name>
        <dbReference type="ChEBI" id="CHEBI:18420"/>
        <label>1</label>
    </ligand>
</feature>
<feature type="binding site" evidence="1">
    <location>
        <position position="299"/>
    </location>
    <ligand>
        <name>Mg(2+)</name>
        <dbReference type="ChEBI" id="CHEBI:18420"/>
        <label>2</label>
    </ligand>
</feature>
<feature type="binding site" evidence="1">
    <location>
        <position position="439"/>
    </location>
    <ligand>
        <name>Mg(2+)</name>
        <dbReference type="ChEBI" id="CHEBI:18420"/>
        <label>3</label>
    </ligand>
</feature>
<feature type="binding site" evidence="1">
    <location>
        <position position="443"/>
    </location>
    <ligand>
        <name>Mg(2+)</name>
        <dbReference type="ChEBI" id="CHEBI:18420"/>
        <label>3</label>
    </ligand>
</feature>
<feature type="binding site" evidence="1">
    <location>
        <position position="447"/>
    </location>
    <ligand>
        <name>Mg(2+)</name>
        <dbReference type="ChEBI" id="CHEBI:18420"/>
        <label>3</label>
    </ligand>
</feature>
<feature type="mutagenesis site" description="No effect on zingiberene production, but increased production of (E)-alpha-bergamotene and (E)-beta-farnesene. Production of beta-sesquiphellandrene and increased production of (E)-alpha-bergamotene and (E)-beta-farnesene; when associated with V-401 or with V-401 and S-435." evidence="2">
    <original>Y</original>
    <variation>S</variation>
    <location>
        <position position="369"/>
    </location>
</feature>
<feature type="mutagenesis site" description="Changed product specificity and production of mainly beta-sesquiphellandrene. Production of beta-sesquiphellandrene and increased production of (E)-alpha-bergamotene and (E)-beta-farnesene; when associated with S-369 or with S-369 and S-435." evidence="2">
    <original>L</original>
    <variation>V</variation>
    <location>
        <position position="401"/>
    </location>
</feature>
<feature type="mutagenesis site" description="Production of mainly beta-sesquiphellandrene and beta-bisabolene. Production of beta-sesquiphellandrene and increased production of (E)-alpha-bergamotene and (E)-beta-farnesene; when associated with S-369 and V-401." evidence="2">
    <original>V</original>
    <variation>S</variation>
    <location>
        <position position="435"/>
    </location>
</feature>
<organism>
    <name type="scientific">Sorghum bicolor</name>
    <name type="common">Sorghum</name>
    <name type="synonym">Sorghum vulgare</name>
    <dbReference type="NCBI Taxonomy" id="4558"/>
    <lineage>
        <taxon>Eukaryota</taxon>
        <taxon>Viridiplantae</taxon>
        <taxon>Streptophyta</taxon>
        <taxon>Embryophyta</taxon>
        <taxon>Tracheophyta</taxon>
        <taxon>Spermatophyta</taxon>
        <taxon>Magnoliopsida</taxon>
        <taxon>Liliopsida</taxon>
        <taxon>Poales</taxon>
        <taxon>Poaceae</taxon>
        <taxon>PACMAD clade</taxon>
        <taxon>Panicoideae</taxon>
        <taxon>Andropogonodae</taxon>
        <taxon>Andropogoneae</taxon>
        <taxon>Sorghinae</taxon>
        <taxon>Sorghum</taxon>
    </lineage>
</organism>
<keyword id="KW-0963">Cytoplasm</keyword>
<keyword id="KW-0456">Lyase</keyword>
<keyword id="KW-0460">Magnesium</keyword>
<keyword id="KW-0464">Manganese</keyword>
<keyword id="KW-0479">Metal-binding</keyword>
<keyword id="KW-0611">Plant defense</keyword>
<keyword id="KW-1185">Reference proteome</keyword>